<comment type="subcellular location">
    <subcellularLocation>
        <location evidence="1">Cellular thylakoid membrane</location>
        <topology evidence="1">Single-pass membrane protein</topology>
    </subcellularLocation>
</comment>
<comment type="similarity">
    <text evidence="1">Belongs to the PsaM family.</text>
</comment>
<proteinExistence type="inferred from homology"/>
<accession>Q2JI37</accession>
<organism>
    <name type="scientific">Synechococcus sp. (strain JA-2-3B'a(2-13))</name>
    <name type="common">Cyanobacteria bacterium Yellowstone B-Prime</name>
    <dbReference type="NCBI Taxonomy" id="321332"/>
    <lineage>
        <taxon>Bacteria</taxon>
        <taxon>Bacillati</taxon>
        <taxon>Cyanobacteriota</taxon>
        <taxon>Cyanophyceae</taxon>
        <taxon>Synechococcales</taxon>
        <taxon>Synechococcaceae</taxon>
        <taxon>Synechococcus</taxon>
    </lineage>
</organism>
<dbReference type="EMBL" id="CP000240">
    <property type="protein sequence ID" value="ABD03732.1"/>
    <property type="molecule type" value="Genomic_DNA"/>
</dbReference>
<dbReference type="RefSeq" id="WP_011434349.1">
    <property type="nucleotide sequence ID" value="NC_007776.1"/>
</dbReference>
<dbReference type="SMR" id="Q2JI37"/>
<dbReference type="STRING" id="321332.CYB_2809"/>
<dbReference type="KEGG" id="cyb:CYB_2809"/>
<dbReference type="HOGENOM" id="CLU_215773_3_0_3"/>
<dbReference type="OrthoDB" id="9899055at2"/>
<dbReference type="Proteomes" id="UP000001938">
    <property type="component" value="Chromosome"/>
</dbReference>
<dbReference type="GO" id="GO:0009522">
    <property type="term" value="C:photosystem I"/>
    <property type="evidence" value="ECO:0007669"/>
    <property type="project" value="UniProtKB-KW"/>
</dbReference>
<dbReference type="GO" id="GO:0031676">
    <property type="term" value="C:plasma membrane-derived thylakoid membrane"/>
    <property type="evidence" value="ECO:0007669"/>
    <property type="project" value="UniProtKB-SubCell"/>
</dbReference>
<dbReference type="GO" id="GO:0015979">
    <property type="term" value="P:photosynthesis"/>
    <property type="evidence" value="ECO:0007669"/>
    <property type="project" value="UniProtKB-UniRule"/>
</dbReference>
<dbReference type="HAMAP" id="MF_00828">
    <property type="entry name" value="PSI_PsaM"/>
    <property type="match status" value="1"/>
</dbReference>
<dbReference type="InterPro" id="IPR010010">
    <property type="entry name" value="PSI_PsaM"/>
</dbReference>
<dbReference type="InterPro" id="IPR037279">
    <property type="entry name" value="PSI_PsaM_sf"/>
</dbReference>
<dbReference type="NCBIfam" id="TIGR03053">
    <property type="entry name" value="PS_I_psaM"/>
    <property type="match status" value="1"/>
</dbReference>
<dbReference type="Pfam" id="PF07465">
    <property type="entry name" value="PsaM"/>
    <property type="match status" value="1"/>
</dbReference>
<dbReference type="SUPFAM" id="SSF81548">
    <property type="entry name" value="Subunit XII of photosystem I reaction centre, PsaM"/>
    <property type="match status" value="1"/>
</dbReference>
<evidence type="ECO:0000255" key="1">
    <source>
        <dbReference type="HAMAP-Rule" id="MF_00828"/>
    </source>
</evidence>
<gene>
    <name evidence="1" type="primary">psaM</name>
    <name type="ordered locus">CYB_2809</name>
</gene>
<feature type="chain" id="PRO_0000277395" description="Photosystem I reaction center subunit XII">
    <location>
        <begin position="1"/>
        <end position="30"/>
    </location>
</feature>
<feature type="transmembrane region" description="Helical" evidence="1">
    <location>
        <begin position="6"/>
        <end position="26"/>
    </location>
</feature>
<sequence length="30" mass="3058">MTDAQVFTILAIALVPAVMALLLGSALARS</sequence>
<keyword id="KW-0472">Membrane</keyword>
<keyword id="KW-0602">Photosynthesis</keyword>
<keyword id="KW-0603">Photosystem I</keyword>
<keyword id="KW-1185">Reference proteome</keyword>
<keyword id="KW-0793">Thylakoid</keyword>
<keyword id="KW-0812">Transmembrane</keyword>
<keyword id="KW-1133">Transmembrane helix</keyword>
<reference key="1">
    <citation type="journal article" date="2007" name="ISME J.">
        <title>Population level functional diversity in a microbial community revealed by comparative genomic and metagenomic analyses.</title>
        <authorList>
            <person name="Bhaya D."/>
            <person name="Grossman A.R."/>
            <person name="Steunou A.-S."/>
            <person name="Khuri N."/>
            <person name="Cohan F.M."/>
            <person name="Hamamura N."/>
            <person name="Melendrez M.C."/>
            <person name="Bateson M.M."/>
            <person name="Ward D.M."/>
            <person name="Heidelberg J.F."/>
        </authorList>
    </citation>
    <scope>NUCLEOTIDE SEQUENCE [LARGE SCALE GENOMIC DNA]</scope>
    <source>
        <strain>JA-2-3B'a(2-13)</strain>
    </source>
</reference>
<name>PSAM_SYNJB</name>
<protein>
    <recommendedName>
        <fullName evidence="1">Photosystem I reaction center subunit XII</fullName>
    </recommendedName>
    <alternativeName>
        <fullName evidence="1">PSI-M</fullName>
    </alternativeName>
</protein>